<name>RDS1_YEAST</name>
<protein>
    <recommendedName>
        <fullName>Regulator of drug sensitivity 1</fullName>
    </recommendedName>
</protein>
<accession>P25611</accession>
<accession>D6VRA6</accession>
<sequence length="832" mass="95690">MDSITVKKPRLRLVCLQCKKIKRKCDKLRPACSRCQQNSLQCEYEERTDLSANVAANDSDGFNSSHKLNFEQQPVLERTGLRYSLQVPEGVVNATLSIWNAEDMLVIVGLVTFLDYPFAAHSLAQHDQYIRALCASLYGMALVDFSNYANGIPCEDTSRSILGPLSFIEKAIFRRIEHSKQFRVQSAALGLLYNAFSMEEENFSTLLPSLIAEVEDVLMQKKDCEILLRCFYQNIYPFYPFMDISLFESDLTSLLLQDDNNRWKISTEVKNVRKKIETLSLLTIVMAMALMHSKLDANLLSMVKENASESARKLSLLCHKLLCLLDVFRYPNENTFTCLLYFYVSEHLDPESPDCVLSPTNLLTLHHLLNLSMTLGLQYEPSKYKRFKDPEVIRQRRILWLGVQSLLFQISLAEGDAGKSNSEYMEAYLTDFEEYIEASSEYEKSSASESNVQMNDIVWNKYKFHVILSKLMSDCTSVIQHPQLFHILGNIKRSEDFMAENFPTSSIYQPLHEKEPNAIKVGKSTVLDVMDIQKTEIFLTNIVGSMCFLNIFDVLSLHFEKKCVMHWEEYEKNYHFLTLKSFNAYLKLAGLISDYLENKFQGNILESRGYIIDKQICFMLVRIWMFQCRILLRFSYKQESQKKLASSSISTNDNEKEDEMIVILERLIKHIRNQMAHLVDLAKGKLQDSYFGAYQTVPMFRYVVYLIDVGGLVSVTNGFWDKISSDGEIPPKVQQAVRLKWGLDCNNSRRIKQKLISSQSLQSFNQVLLCQMEDAVLSSSFAIKANTAMSQNTAEEFFNISEEEALNQLLENNNFDAFWDLLGENLSDMPSL</sequence>
<reference key="1">
    <citation type="journal article" date="1992" name="Nature">
        <title>The complete DNA sequence of yeast chromosome III.</title>
        <authorList>
            <person name="Oliver S.G."/>
            <person name="van der Aart Q.J.M."/>
            <person name="Agostoni-Carbone M.L."/>
            <person name="Aigle M."/>
            <person name="Alberghina L."/>
            <person name="Alexandraki D."/>
            <person name="Antoine G."/>
            <person name="Anwar R."/>
            <person name="Ballesta J.P.G."/>
            <person name="Benit P."/>
            <person name="Berben G."/>
            <person name="Bergantino E."/>
            <person name="Biteau N."/>
            <person name="Bolle P.-A."/>
            <person name="Bolotin-Fukuhara M."/>
            <person name="Brown A."/>
            <person name="Brown A.J.P."/>
            <person name="Buhler J.-M."/>
            <person name="Carcano C."/>
            <person name="Carignani G."/>
            <person name="Cederberg H."/>
            <person name="Chanet R."/>
            <person name="Contreras R."/>
            <person name="Crouzet M."/>
            <person name="Daignan-Fornier B."/>
            <person name="Defoor E."/>
            <person name="Delgado M.D."/>
            <person name="Demolder J."/>
            <person name="Doira C."/>
            <person name="Dubois E."/>
            <person name="Dujon B."/>
            <person name="Duesterhoeft A."/>
            <person name="Erdmann D."/>
            <person name="Esteban M."/>
            <person name="Fabre F."/>
            <person name="Fairhead C."/>
            <person name="Faye G."/>
            <person name="Feldmann H."/>
            <person name="Fiers W."/>
            <person name="Francingues-Gaillard M.-C."/>
            <person name="Franco L."/>
            <person name="Frontali L."/>
            <person name="Fukuhara H."/>
            <person name="Fuller L.J."/>
            <person name="Galland P."/>
            <person name="Gent M.E."/>
            <person name="Gigot D."/>
            <person name="Gilliquet V."/>
            <person name="Glansdorff N."/>
            <person name="Goffeau A."/>
            <person name="Grenson M."/>
            <person name="Grisanti P."/>
            <person name="Grivell L.A."/>
            <person name="de Haan M."/>
            <person name="Haasemann M."/>
            <person name="Hatat D."/>
            <person name="Hoenicka J."/>
            <person name="Hegemann J.H."/>
            <person name="Herbert C.J."/>
            <person name="Hilger F."/>
            <person name="Hohmann S."/>
            <person name="Hollenberg C.P."/>
            <person name="Huse K."/>
            <person name="Iborra F."/>
            <person name="Indge K.J."/>
            <person name="Isono K."/>
            <person name="Jacq C."/>
            <person name="Jacquet M."/>
            <person name="James C.M."/>
            <person name="Jauniaux J.-C."/>
            <person name="Jia Y."/>
            <person name="Jimenez A."/>
            <person name="Kelly A."/>
            <person name="Kleinhans U."/>
            <person name="Kreisl P."/>
            <person name="Lanfranchi G."/>
            <person name="Lewis C."/>
            <person name="van der Linden C.G."/>
            <person name="Lucchini G."/>
            <person name="Lutzenkirchen K."/>
            <person name="Maat M.J."/>
            <person name="Mallet L."/>
            <person name="Mannhaupt G."/>
            <person name="Martegani E."/>
            <person name="Mathieu A."/>
            <person name="Maurer C.T.C."/>
            <person name="McConnell D."/>
            <person name="McKee R.A."/>
            <person name="Messenguy F."/>
            <person name="Mewes H.-W."/>
            <person name="Molemans F."/>
            <person name="Montague M.A."/>
            <person name="Muzi Falconi M."/>
            <person name="Navas L."/>
            <person name="Newlon C.S."/>
            <person name="Noone D."/>
            <person name="Pallier C."/>
            <person name="Panzeri L."/>
            <person name="Pearson B.M."/>
            <person name="Perea J."/>
            <person name="Philippsen P."/>
            <person name="Pierard A."/>
            <person name="Planta R.J."/>
            <person name="Plevani P."/>
            <person name="Poetsch B."/>
            <person name="Pohl F.M."/>
            <person name="Purnelle B."/>
            <person name="Ramezani Rad M."/>
            <person name="Rasmussen S.W."/>
            <person name="Raynal A."/>
            <person name="Remacha M.A."/>
            <person name="Richterich P."/>
            <person name="Roberts A.B."/>
            <person name="Rodriguez F."/>
            <person name="Sanz E."/>
            <person name="Schaaff-Gerstenschlaeger I."/>
            <person name="Scherens B."/>
            <person name="Schweitzer B."/>
            <person name="Shu Y."/>
            <person name="Skala J."/>
            <person name="Slonimski P.P."/>
            <person name="Sor F."/>
            <person name="Soustelle C."/>
            <person name="Spiegelberg R."/>
            <person name="Stateva L.I."/>
            <person name="Steensma H.Y."/>
            <person name="Steiner S."/>
            <person name="Thierry A."/>
            <person name="Thireos G."/>
            <person name="Tzermia M."/>
            <person name="Urrestarazu L.A."/>
            <person name="Valle G."/>
            <person name="Vetter I."/>
            <person name="van Vliet-Reedijk J.C."/>
            <person name="Voet M."/>
            <person name="Volckaert G."/>
            <person name="Vreken P."/>
            <person name="Wang H."/>
            <person name="Warmington J.R."/>
            <person name="von Wettstein D."/>
            <person name="Wicksteed B.L."/>
            <person name="Wilson C."/>
            <person name="Wurst H."/>
            <person name="Xu G."/>
            <person name="Yoshikawa A."/>
            <person name="Zimmermann F.K."/>
            <person name="Sgouros J.G."/>
        </authorList>
    </citation>
    <scope>NUCLEOTIDE SEQUENCE [LARGE SCALE GENOMIC DNA]</scope>
    <source>
        <strain>ATCC 204508 / S288c</strain>
    </source>
</reference>
<reference key="2">
    <citation type="journal article" date="2014" name="G3 (Bethesda)">
        <title>The reference genome sequence of Saccharomyces cerevisiae: Then and now.</title>
        <authorList>
            <person name="Engel S.R."/>
            <person name="Dietrich F.S."/>
            <person name="Fisk D.G."/>
            <person name="Binkley G."/>
            <person name="Balakrishnan R."/>
            <person name="Costanzo M.C."/>
            <person name="Dwight S.S."/>
            <person name="Hitz B.C."/>
            <person name="Karra K."/>
            <person name="Nash R.S."/>
            <person name="Weng S."/>
            <person name="Wong E.D."/>
            <person name="Lloyd P."/>
            <person name="Skrzypek M.S."/>
            <person name="Miyasato S.R."/>
            <person name="Simison M."/>
            <person name="Cherry J.M."/>
        </authorList>
    </citation>
    <scope>GENOME REANNOTATION</scope>
    <source>
        <strain>ATCC 204508 / S288c</strain>
    </source>
</reference>
<reference key="3">
    <citation type="journal article" date="1992" name="Nature">
        <title>What's in a genome?</title>
        <authorList>
            <person name="Bork P."/>
            <person name="Ouzounis C."/>
            <person name="Sander C."/>
            <person name="Scharf M."/>
            <person name="Schneider R."/>
            <person name="Sonnhammer E."/>
        </authorList>
    </citation>
    <scope>PRESENCE OF A ZN(2)-CYS(6) FUNGAL-TYPE BINUCLEAR CLUSTER</scope>
</reference>
<reference key="4">
    <citation type="journal article" date="2002" name="J. Biol. Chem.">
        <title>New regulators of drug sensitivity in the family of yeast zinc cluster proteins.</title>
        <authorList>
            <person name="Akache B."/>
            <person name="Turcotte B."/>
        </authorList>
    </citation>
    <scope>FUNCTION</scope>
</reference>
<reference key="5">
    <citation type="journal article" date="2004" name="Nature">
        <title>Transcriptional regulatory code of a eukaryotic genome.</title>
        <authorList>
            <person name="Harbison C.T."/>
            <person name="Gordon D.B."/>
            <person name="Lee T.I."/>
            <person name="Rinaldi N.J."/>
            <person name="Macisaac K.D."/>
            <person name="Danford T.W."/>
            <person name="Hannett N.M."/>
            <person name="Tagne J.B."/>
            <person name="Reynolds D.B."/>
            <person name="Yoo J."/>
            <person name="Jennings E.G."/>
            <person name="Zeitlinger J."/>
            <person name="Pokholok D.K."/>
            <person name="Kellis M."/>
            <person name="Rolfe P.A."/>
            <person name="Takusagawa K.T."/>
            <person name="Lander E.S."/>
            <person name="Gifford D.K."/>
            <person name="Fraenkel E."/>
            <person name="Young R.A."/>
        </authorList>
    </citation>
    <scope>FUNCTION</scope>
</reference>
<reference key="6">
    <citation type="journal article" date="2009" name="Genome Res.">
        <title>High-resolution DNA-binding specificity analysis of yeast transcription factors.</title>
        <authorList>
            <person name="Zhu C."/>
            <person name="Byers K.J."/>
            <person name="McCord R.P."/>
            <person name="Shi Z."/>
            <person name="Berger M.F."/>
            <person name="Newburger D.E."/>
            <person name="Saulrieta K."/>
            <person name="Smith Z."/>
            <person name="Shah M.V."/>
            <person name="Radhakrishnan M."/>
            <person name="Philippakis A.A."/>
            <person name="Hu Y."/>
            <person name="De Masi F."/>
            <person name="Pacek M."/>
            <person name="Rolfs A."/>
            <person name="Murthy T.V.S."/>
            <person name="Labaer J."/>
            <person name="Bulyk M.L."/>
        </authorList>
    </citation>
    <scope>DNA-BINDING</scope>
</reference>
<organism>
    <name type="scientific">Saccharomyces cerevisiae (strain ATCC 204508 / S288c)</name>
    <name type="common">Baker's yeast</name>
    <dbReference type="NCBI Taxonomy" id="559292"/>
    <lineage>
        <taxon>Eukaryota</taxon>
        <taxon>Fungi</taxon>
        <taxon>Dikarya</taxon>
        <taxon>Ascomycota</taxon>
        <taxon>Saccharomycotina</taxon>
        <taxon>Saccharomycetes</taxon>
        <taxon>Saccharomycetales</taxon>
        <taxon>Saccharomycetaceae</taxon>
        <taxon>Saccharomyces</taxon>
    </lineage>
</organism>
<comment type="function">
    <text evidence="2 3">Zinc cluster transcription factor involved in resistance to cycloheximide.</text>
</comment>
<comment type="subcellular location">
    <subcellularLocation>
        <location evidence="4">Nucleus</location>
    </subcellularLocation>
</comment>
<evidence type="ECO:0000255" key="1">
    <source>
        <dbReference type="PROSITE-ProRule" id="PRU00227"/>
    </source>
</evidence>
<evidence type="ECO:0000269" key="2">
    <source>
    </source>
</evidence>
<evidence type="ECO:0000269" key="3">
    <source>
    </source>
</evidence>
<evidence type="ECO:0000305" key="4"/>
<proteinExistence type="evidence at protein level"/>
<feature type="chain" id="PRO_0000114994" description="Regulator of drug sensitivity 1">
    <location>
        <begin position="1"/>
        <end position="832"/>
    </location>
</feature>
<feature type="DNA-binding region" description="Zn(2)-C6 fungal-type" evidence="1">
    <location>
        <begin position="15"/>
        <end position="42"/>
    </location>
</feature>
<gene>
    <name type="primary">RDS1</name>
    <name type="ordered locus">YCR106W</name>
</gene>
<dbReference type="EMBL" id="X59720">
    <property type="protein sequence ID" value="CAA42238.1"/>
    <property type="molecule type" value="Genomic_DNA"/>
</dbReference>
<dbReference type="EMBL" id="BK006937">
    <property type="protein sequence ID" value="DAA07575.1"/>
    <property type="molecule type" value="Genomic_DNA"/>
</dbReference>
<dbReference type="PIR" id="S19418">
    <property type="entry name" value="S19418"/>
</dbReference>
<dbReference type="RefSeq" id="NP_010031.1">
    <property type="nucleotide sequence ID" value="NM_001178813.1"/>
</dbReference>
<dbReference type="SMR" id="P25611"/>
<dbReference type="BioGRID" id="31078">
    <property type="interactions" value="45"/>
</dbReference>
<dbReference type="DIP" id="DIP-2014N"/>
<dbReference type="FunCoup" id="P25611">
    <property type="interactions" value="346"/>
</dbReference>
<dbReference type="IntAct" id="P25611">
    <property type="interactions" value="24"/>
</dbReference>
<dbReference type="MINT" id="P25611"/>
<dbReference type="STRING" id="4932.YCR106W"/>
<dbReference type="iPTMnet" id="P25611"/>
<dbReference type="PaxDb" id="4932-YCR106W"/>
<dbReference type="PeptideAtlas" id="P25611"/>
<dbReference type="EnsemblFungi" id="YCR106W_mRNA">
    <property type="protein sequence ID" value="YCR106W"/>
    <property type="gene ID" value="YCR106W"/>
</dbReference>
<dbReference type="GeneID" id="850470"/>
<dbReference type="KEGG" id="sce:YCR106W"/>
<dbReference type="AGR" id="SGD:S000000703"/>
<dbReference type="SGD" id="S000000703">
    <property type="gene designation" value="RDS1"/>
</dbReference>
<dbReference type="VEuPathDB" id="FungiDB:YCR106W"/>
<dbReference type="eggNOG" id="ENOG502RJ72">
    <property type="taxonomic scope" value="Eukaryota"/>
</dbReference>
<dbReference type="GeneTree" id="ENSGT00940000176335"/>
<dbReference type="HOGENOM" id="CLU_015392_0_0_1"/>
<dbReference type="InParanoid" id="P25611"/>
<dbReference type="OMA" id="TIEDRMH"/>
<dbReference type="OrthoDB" id="2943660at2759"/>
<dbReference type="BioCyc" id="YEAST:G3O-29398-MONOMER"/>
<dbReference type="BioGRID-ORCS" id="850470">
    <property type="hits" value="0 hits in 13 CRISPR screens"/>
</dbReference>
<dbReference type="PRO" id="PR:P25611"/>
<dbReference type="Proteomes" id="UP000002311">
    <property type="component" value="Chromosome III"/>
</dbReference>
<dbReference type="RNAct" id="P25611">
    <property type="molecule type" value="protein"/>
</dbReference>
<dbReference type="GO" id="GO:0005634">
    <property type="term" value="C:nucleus"/>
    <property type="evidence" value="ECO:0000318"/>
    <property type="project" value="GO_Central"/>
</dbReference>
<dbReference type="GO" id="GO:0000981">
    <property type="term" value="F:DNA-binding transcription factor activity, RNA polymerase II-specific"/>
    <property type="evidence" value="ECO:0000318"/>
    <property type="project" value="GO_Central"/>
</dbReference>
<dbReference type="GO" id="GO:0043565">
    <property type="term" value="F:sequence-specific DNA binding"/>
    <property type="evidence" value="ECO:0007005"/>
    <property type="project" value="SGD"/>
</dbReference>
<dbReference type="GO" id="GO:0008270">
    <property type="term" value="F:zinc ion binding"/>
    <property type="evidence" value="ECO:0007669"/>
    <property type="project" value="InterPro"/>
</dbReference>
<dbReference type="GO" id="GO:0045944">
    <property type="term" value="P:positive regulation of transcription by RNA polymerase II"/>
    <property type="evidence" value="ECO:0000318"/>
    <property type="project" value="GO_Central"/>
</dbReference>
<dbReference type="GO" id="GO:0009410">
    <property type="term" value="P:response to xenobiotic stimulus"/>
    <property type="evidence" value="ECO:0000315"/>
    <property type="project" value="SGD"/>
</dbReference>
<dbReference type="CDD" id="cd12148">
    <property type="entry name" value="fungal_TF_MHR"/>
    <property type="match status" value="1"/>
</dbReference>
<dbReference type="CDD" id="cd00067">
    <property type="entry name" value="GAL4"/>
    <property type="match status" value="1"/>
</dbReference>
<dbReference type="Gene3D" id="4.10.240.10">
    <property type="entry name" value="Zn(2)-C6 fungal-type DNA-binding domain"/>
    <property type="match status" value="1"/>
</dbReference>
<dbReference type="InterPro" id="IPR050675">
    <property type="entry name" value="OAF3"/>
</dbReference>
<dbReference type="InterPro" id="IPR036864">
    <property type="entry name" value="Zn2-C6_fun-type_DNA-bd_sf"/>
</dbReference>
<dbReference type="InterPro" id="IPR001138">
    <property type="entry name" value="Zn2Cys6_DnaBD"/>
</dbReference>
<dbReference type="PANTHER" id="PTHR31069">
    <property type="entry name" value="OLEATE-ACTIVATED TRANSCRIPTION FACTOR 1-RELATED"/>
    <property type="match status" value="1"/>
</dbReference>
<dbReference type="PANTHER" id="PTHR31069:SF29">
    <property type="entry name" value="OLEATE-ACTIVATED TRANSCRIPTION FACTOR 1-RELATED"/>
    <property type="match status" value="1"/>
</dbReference>
<dbReference type="Pfam" id="PF00172">
    <property type="entry name" value="Zn_clus"/>
    <property type="match status" value="1"/>
</dbReference>
<dbReference type="SMART" id="SM00066">
    <property type="entry name" value="GAL4"/>
    <property type="match status" value="1"/>
</dbReference>
<dbReference type="SUPFAM" id="SSF57701">
    <property type="entry name" value="Zn2/Cys6 DNA-binding domain"/>
    <property type="match status" value="1"/>
</dbReference>
<dbReference type="PROSITE" id="PS00463">
    <property type="entry name" value="ZN2_CY6_FUNGAL_1"/>
    <property type="match status" value="1"/>
</dbReference>
<dbReference type="PROSITE" id="PS50048">
    <property type="entry name" value="ZN2_CY6_FUNGAL_2"/>
    <property type="match status" value="1"/>
</dbReference>
<keyword id="KW-0238">DNA-binding</keyword>
<keyword id="KW-0479">Metal-binding</keyword>
<keyword id="KW-0539">Nucleus</keyword>
<keyword id="KW-1185">Reference proteome</keyword>
<keyword id="KW-0804">Transcription</keyword>
<keyword id="KW-0805">Transcription regulation</keyword>
<keyword id="KW-0862">Zinc</keyword>